<comment type="function">
    <text evidence="1">Catalyzes the insertion of one atom of molecular oxygen into position 2 of the phenyl ring of 3-(3-hydroxyphenyl)propionate (3-HPP) and hydroxycinnamic acid (3HCI).</text>
</comment>
<comment type="catalytic activity">
    <reaction evidence="1">
        <text>3-(3-hydroxyphenyl)propanoate + NADH + O2 + H(+) = 3-(2,3-dihydroxyphenyl)propanoate + NAD(+) + H2O</text>
        <dbReference type="Rhea" id="RHEA:24785"/>
        <dbReference type="ChEBI" id="CHEBI:15377"/>
        <dbReference type="ChEBI" id="CHEBI:15378"/>
        <dbReference type="ChEBI" id="CHEBI:15379"/>
        <dbReference type="ChEBI" id="CHEBI:46951"/>
        <dbReference type="ChEBI" id="CHEBI:57277"/>
        <dbReference type="ChEBI" id="CHEBI:57540"/>
        <dbReference type="ChEBI" id="CHEBI:57945"/>
        <dbReference type="EC" id="1.14.13.127"/>
    </reaction>
</comment>
<comment type="catalytic activity">
    <reaction evidence="1">
        <text>(2E)-3-(3-hydroxyphenyl)prop-2-enoate + NADH + O2 + H(+) = (2E)-3-(2,3-dihydroxyphenyl)prop-2-enoate + NAD(+) + H2O</text>
        <dbReference type="Rhea" id="RHEA:27846"/>
        <dbReference type="ChEBI" id="CHEBI:15377"/>
        <dbReference type="ChEBI" id="CHEBI:15378"/>
        <dbReference type="ChEBI" id="CHEBI:15379"/>
        <dbReference type="ChEBI" id="CHEBI:47928"/>
        <dbReference type="ChEBI" id="CHEBI:57540"/>
        <dbReference type="ChEBI" id="CHEBI:57945"/>
        <dbReference type="ChEBI" id="CHEBI:58642"/>
        <dbReference type="EC" id="1.14.13.127"/>
    </reaction>
</comment>
<comment type="cofactor">
    <cofactor evidence="1">
        <name>FAD</name>
        <dbReference type="ChEBI" id="CHEBI:57692"/>
    </cofactor>
</comment>
<comment type="pathway">
    <text evidence="1">Aromatic compound metabolism; 3-phenylpropanoate degradation.</text>
</comment>
<comment type="similarity">
    <text evidence="1">Belongs to the PheA/TfdB FAD monooxygenase family.</text>
</comment>
<keyword id="KW-0058">Aromatic hydrocarbons catabolism</keyword>
<keyword id="KW-0274">FAD</keyword>
<keyword id="KW-0285">Flavoprotein</keyword>
<keyword id="KW-0520">NAD</keyword>
<keyword id="KW-0560">Oxidoreductase</keyword>
<feature type="chain" id="PRO_5000232604" description="3-(3-hydroxy-phenyl)propionate/3-hydroxycinnamic acid hydroxylase 2">
    <location>
        <begin position="1"/>
        <end position="546"/>
    </location>
</feature>
<feature type="binding site" evidence="1">
    <location>
        <begin position="10"/>
        <end position="39"/>
    </location>
    <ligand>
        <name>FAD</name>
        <dbReference type="ChEBI" id="CHEBI:57692"/>
    </ligand>
</feature>
<feature type="binding site" evidence="1">
    <location>
        <begin position="278"/>
        <end position="288"/>
    </location>
    <ligand>
        <name>FAD</name>
        <dbReference type="ChEBI" id="CHEBI:57692"/>
    </ligand>
</feature>
<reference key="1">
    <citation type="submission" date="2007-03" db="EMBL/GenBank/DDBJ databases">
        <title>Complete sequence of chromosome 3 of Burkholderia vietnamiensis G4.</title>
        <authorList>
            <consortium name="US DOE Joint Genome Institute"/>
            <person name="Copeland A."/>
            <person name="Lucas S."/>
            <person name="Lapidus A."/>
            <person name="Barry K."/>
            <person name="Detter J.C."/>
            <person name="Glavina del Rio T."/>
            <person name="Hammon N."/>
            <person name="Israni S."/>
            <person name="Dalin E."/>
            <person name="Tice H."/>
            <person name="Pitluck S."/>
            <person name="Chain P."/>
            <person name="Malfatti S."/>
            <person name="Shin M."/>
            <person name="Vergez L."/>
            <person name="Schmutz J."/>
            <person name="Larimer F."/>
            <person name="Land M."/>
            <person name="Hauser L."/>
            <person name="Kyrpides N."/>
            <person name="Tiedje J."/>
            <person name="Richardson P."/>
        </authorList>
    </citation>
    <scope>NUCLEOTIDE SEQUENCE [LARGE SCALE GENOMIC DNA]</scope>
    <source>
        <strain>G4 / LMG 22486</strain>
    </source>
</reference>
<proteinExistence type="inferred from homology"/>
<dbReference type="EC" id="1.14.13.127" evidence="1"/>
<dbReference type="EMBL" id="CP000616">
    <property type="protein sequence ID" value="ABO58527.1"/>
    <property type="molecule type" value="Genomic_DNA"/>
</dbReference>
<dbReference type="SMR" id="A4JQH4"/>
<dbReference type="KEGG" id="bvi:Bcep1808_5589"/>
<dbReference type="eggNOG" id="COG0654">
    <property type="taxonomic scope" value="Bacteria"/>
</dbReference>
<dbReference type="HOGENOM" id="CLU_009665_20_2_4"/>
<dbReference type="UniPathway" id="UPA00714"/>
<dbReference type="Proteomes" id="UP000002287">
    <property type="component" value="Chromosome 3"/>
</dbReference>
<dbReference type="GO" id="GO:0008688">
    <property type="term" value="F:3-(3-hydroxyphenyl)propionate hydroxylase activity"/>
    <property type="evidence" value="ECO:0007669"/>
    <property type="project" value="UniProtKB-UniRule"/>
</dbReference>
<dbReference type="GO" id="GO:0071949">
    <property type="term" value="F:FAD binding"/>
    <property type="evidence" value="ECO:0007669"/>
    <property type="project" value="InterPro"/>
</dbReference>
<dbReference type="GO" id="GO:0019622">
    <property type="term" value="P:3-(3-hydroxy)phenylpropionate catabolic process"/>
    <property type="evidence" value="ECO:0007669"/>
    <property type="project" value="UniProtKB-UniRule"/>
</dbReference>
<dbReference type="GO" id="GO:0019380">
    <property type="term" value="P:3-phenylpropionate catabolic process"/>
    <property type="evidence" value="ECO:0007669"/>
    <property type="project" value="UniProtKB-UniPathway"/>
</dbReference>
<dbReference type="Gene3D" id="3.30.70.2450">
    <property type="match status" value="1"/>
</dbReference>
<dbReference type="Gene3D" id="3.50.50.60">
    <property type="entry name" value="FAD/NAD(P)-binding domain"/>
    <property type="match status" value="1"/>
</dbReference>
<dbReference type="HAMAP" id="MF_01652">
    <property type="entry name" value="MhpA"/>
    <property type="match status" value="1"/>
</dbReference>
<dbReference type="InterPro" id="IPR023786">
    <property type="entry name" value="3-HPP/3HCI_hydroxylase"/>
</dbReference>
<dbReference type="InterPro" id="IPR002938">
    <property type="entry name" value="FAD-bd"/>
</dbReference>
<dbReference type="InterPro" id="IPR036188">
    <property type="entry name" value="FAD/NAD-bd_sf"/>
</dbReference>
<dbReference type="InterPro" id="IPR050631">
    <property type="entry name" value="PheA/TfdB_FAD_monoxygenase"/>
</dbReference>
<dbReference type="NCBIfam" id="NF004829">
    <property type="entry name" value="PRK06183.1-3"/>
    <property type="match status" value="1"/>
</dbReference>
<dbReference type="NCBIfam" id="NF004831">
    <property type="entry name" value="PRK06183.1-5"/>
    <property type="match status" value="1"/>
</dbReference>
<dbReference type="PANTHER" id="PTHR43476">
    <property type="entry name" value="3-(3-HYDROXY-PHENYL)PROPIONATE/3-HYDROXYCINNAMIC ACID HYDROXYLASE"/>
    <property type="match status" value="1"/>
</dbReference>
<dbReference type="PANTHER" id="PTHR43476:SF3">
    <property type="entry name" value="FAD-BINDING MONOOXYGENASE"/>
    <property type="match status" value="1"/>
</dbReference>
<dbReference type="Pfam" id="PF01494">
    <property type="entry name" value="FAD_binding_3"/>
    <property type="match status" value="1"/>
</dbReference>
<dbReference type="PRINTS" id="PR00420">
    <property type="entry name" value="RNGMNOXGNASE"/>
</dbReference>
<dbReference type="SUPFAM" id="SSF51905">
    <property type="entry name" value="FAD/NAD(P)-binding domain"/>
    <property type="match status" value="1"/>
</dbReference>
<organism>
    <name type="scientific">Burkholderia vietnamiensis (strain G4 / LMG 22486)</name>
    <name type="common">Burkholderia cepacia (strain R1808)</name>
    <dbReference type="NCBI Taxonomy" id="269482"/>
    <lineage>
        <taxon>Bacteria</taxon>
        <taxon>Pseudomonadati</taxon>
        <taxon>Pseudomonadota</taxon>
        <taxon>Betaproteobacteria</taxon>
        <taxon>Burkholderiales</taxon>
        <taxon>Burkholderiaceae</taxon>
        <taxon>Burkholderia</taxon>
        <taxon>Burkholderia cepacia complex</taxon>
    </lineage>
</organism>
<evidence type="ECO:0000255" key="1">
    <source>
        <dbReference type="HAMAP-Rule" id="MF_01652"/>
    </source>
</evidence>
<accession>A4JQH4</accession>
<name>MHPA2_BURVG</name>
<gene>
    <name evidence="1" type="primary">mhpA2</name>
    <name type="ordered locus">Bcep1808_5589</name>
</gene>
<protein>
    <recommendedName>
        <fullName evidence="1">3-(3-hydroxy-phenyl)propionate/3-hydroxycinnamic acid hydroxylase 2</fullName>
        <shortName evidence="1">3-HCI hydroxylase 2</shortName>
        <shortName evidence="1">3-HPP hydroxylase 2</shortName>
        <ecNumber evidence="1">1.14.13.127</ecNumber>
    </recommendedName>
</protein>
<sequence length="546" mass="60037">MKADNRNRTSVAIVGAGPNGAALANLLGLYGVDTVVVERAPQIVDFPRAVGIDDEALRLFQTAGVADELSRDIIQNVPLRMFNARGECFADVRPSVREFGWWRRNIFMQHLAERTLRDALARYPHVSLRTGEEVVGLEQDDAHVTLRVQGADGQHYALDADYVVAADGGRSPLREMLGIPLAGTTHPMKWVVVDVKNAGLDQPCTALNCDPRRPNVCIYLPFNYRRWEFLVFPHEDEQAIAQPESIRALIAPYVEDVERLEIVRARTYTHHSRVAERFVAGRIALVGDAAHLSPPWIGQGLNAGLRDVGNLAWKLAGIVHGRLNPGVLATYESERRAHAKAMIDLADTFGAMLMPTSRPVAFLRDRLLAAARFAPGLKDYVLQMRFKPMPSYTRGVVVTGASDASGAIGRMIVQPDVETADGVRRKLDDVLGPWFSIIGWQCDPQASLSDDERAFWTALGAKFVQIVRSRSGTCREQRIASAHGSECVEDVDNAMADWFDRHAGPLVVVRPDRYVAAQTDAVGIAGVTAAFRAFAPQQQAEAAHVC</sequence>